<gene>
    <name type="primary">fabF</name>
    <name type="ordered locus">sll1069</name>
</gene>
<evidence type="ECO:0000250" key="1">
    <source>
        <dbReference type="UniProtKB" id="P0AAI5"/>
    </source>
</evidence>
<evidence type="ECO:0000255" key="2">
    <source>
        <dbReference type="PROSITE-ProRule" id="PRU01348"/>
    </source>
</evidence>
<evidence type="ECO:0000269" key="3">
    <source>
    </source>
</evidence>
<evidence type="ECO:0000305" key="4"/>
<evidence type="ECO:0007744" key="5">
    <source>
        <dbReference type="PDB" id="1E5M"/>
    </source>
</evidence>
<evidence type="ECO:0007829" key="6">
    <source>
        <dbReference type="PDB" id="1E5M"/>
    </source>
</evidence>
<reference key="1">
    <citation type="journal article" date="1996" name="DNA Res.">
        <title>Sequence analysis of the genome of the unicellular cyanobacterium Synechocystis sp. strain PCC6803. II. Sequence determination of the entire genome and assignment of potential protein-coding regions.</title>
        <authorList>
            <person name="Kaneko T."/>
            <person name="Sato S."/>
            <person name="Kotani H."/>
            <person name="Tanaka A."/>
            <person name="Asamizu E."/>
            <person name="Nakamura Y."/>
            <person name="Miyajima N."/>
            <person name="Hirosawa M."/>
            <person name="Sugiura M."/>
            <person name="Sasamoto S."/>
            <person name="Kimura T."/>
            <person name="Hosouchi T."/>
            <person name="Matsuno A."/>
            <person name="Muraki A."/>
            <person name="Nakazaki N."/>
            <person name="Naruo K."/>
            <person name="Okumura S."/>
            <person name="Shimpo S."/>
            <person name="Takeuchi C."/>
            <person name="Wada T."/>
            <person name="Watanabe A."/>
            <person name="Yamada M."/>
            <person name="Yasuda M."/>
            <person name="Tabata S."/>
        </authorList>
    </citation>
    <scope>NUCLEOTIDE SEQUENCE [LARGE SCALE GENOMIC DNA]</scope>
    <source>
        <strain>ATCC 27184 / PCC 6803 / Kazusa</strain>
    </source>
</reference>
<reference evidence="5" key="2">
    <citation type="journal article" date="2001" name="J. Mol. Biol.">
        <title>The crystal structure of beta-ketoacyl-acyl carrier protein synthase II from Synechocystis sp. at 1.54 A resolution and its relationship to other condensing enzymes.</title>
        <authorList>
            <person name="Moche M."/>
            <person name="Dehesh K."/>
            <person name="Edwards P."/>
            <person name="Lindqvist Y."/>
        </authorList>
    </citation>
    <scope>X-RAY CRYSTALLOGRAPHY (1.54 ANGSTROMS)</scope>
    <scope>SUBUNIT</scope>
</reference>
<feature type="chain" id="PRO_0000180326" description="3-oxoacyl-[acyl-carrier-protein] synthase 2">
    <location>
        <begin position="1"/>
        <end position="416"/>
    </location>
</feature>
<feature type="domain" description="Ketosynthase family 3 (KS3)" evidence="2">
    <location>
        <begin position="6"/>
        <end position="414"/>
    </location>
</feature>
<feature type="active site" description="For beta-ketoacyl synthase activity" evidence="2">
    <location>
        <position position="167"/>
    </location>
</feature>
<feature type="active site" description="For beta-ketoacyl synthase activity" evidence="2">
    <location>
        <position position="307"/>
    </location>
</feature>
<feature type="active site" description="For beta-ketoacyl synthase activity" evidence="2">
    <location>
        <position position="344"/>
    </location>
</feature>
<feature type="strand" evidence="6">
    <location>
        <begin position="9"/>
        <end position="18"/>
    </location>
</feature>
<feature type="strand" evidence="6">
    <location>
        <begin position="21"/>
        <end position="23"/>
    </location>
</feature>
<feature type="helix" evidence="6">
    <location>
        <begin position="24"/>
        <end position="32"/>
    </location>
</feature>
<feature type="strand" evidence="6">
    <location>
        <begin position="38"/>
        <end position="40"/>
    </location>
</feature>
<feature type="strand" evidence="6">
    <location>
        <begin position="53"/>
        <end position="55"/>
    </location>
</feature>
<feature type="helix" evidence="6">
    <location>
        <begin position="62"/>
        <end position="64"/>
    </location>
</feature>
<feature type="helix" evidence="6">
    <location>
        <begin position="68"/>
        <end position="72"/>
    </location>
</feature>
<feature type="helix" evidence="6">
    <location>
        <begin position="76"/>
        <end position="92"/>
    </location>
</feature>
<feature type="turn" evidence="6">
    <location>
        <begin position="98"/>
        <end position="100"/>
    </location>
</feature>
<feature type="helix" evidence="6">
    <location>
        <begin position="101"/>
        <end position="103"/>
    </location>
</feature>
<feature type="strand" evidence="6">
    <location>
        <begin position="104"/>
        <end position="109"/>
    </location>
</feature>
<feature type="helix" evidence="6">
    <location>
        <begin position="115"/>
        <end position="128"/>
    </location>
</feature>
<feature type="helix" evidence="6">
    <location>
        <begin position="130"/>
        <end position="132"/>
    </location>
</feature>
<feature type="helix" evidence="6">
    <location>
        <begin position="137"/>
        <end position="141"/>
    </location>
</feature>
<feature type="helix" evidence="6">
    <location>
        <begin position="145"/>
        <end position="154"/>
    </location>
</feature>
<feature type="helix" evidence="6">
    <location>
        <begin position="166"/>
        <end position="168"/>
    </location>
</feature>
<feature type="helix" evidence="6">
    <location>
        <begin position="169"/>
        <end position="182"/>
    </location>
</feature>
<feature type="strand" evidence="6">
    <location>
        <begin position="187"/>
        <end position="195"/>
    </location>
</feature>
<feature type="helix" evidence="6">
    <location>
        <begin position="200"/>
        <end position="208"/>
    </location>
</feature>
<feature type="helix" evidence="6">
    <location>
        <begin position="219"/>
        <end position="221"/>
    </location>
</feature>
<feature type="strand" evidence="6">
    <location>
        <begin position="238"/>
        <end position="246"/>
    </location>
</feature>
<feature type="helix" evidence="6">
    <location>
        <begin position="247"/>
        <end position="252"/>
    </location>
</feature>
<feature type="strand" evidence="6">
    <location>
        <begin position="259"/>
        <end position="268"/>
    </location>
</feature>
<feature type="strand" evidence="6">
    <location>
        <begin position="273"/>
        <end position="275"/>
    </location>
</feature>
<feature type="helix" evidence="6">
    <location>
        <begin position="281"/>
        <end position="294"/>
    </location>
</feature>
<feature type="helix" evidence="6">
    <location>
        <begin position="298"/>
        <end position="300"/>
    </location>
</feature>
<feature type="strand" evidence="6">
    <location>
        <begin position="303"/>
        <end position="305"/>
    </location>
</feature>
<feature type="helix" evidence="6">
    <location>
        <begin position="312"/>
        <end position="326"/>
    </location>
</feature>
<feature type="helix" evidence="6">
    <location>
        <begin position="327"/>
        <end position="332"/>
    </location>
</feature>
<feature type="strand" evidence="6">
    <location>
        <begin position="333"/>
        <end position="336"/>
    </location>
</feature>
<feature type="helix" evidence="6">
    <location>
        <begin position="339"/>
        <end position="342"/>
    </location>
</feature>
<feature type="helix" evidence="6">
    <location>
        <begin position="346"/>
        <end position="348"/>
    </location>
</feature>
<feature type="helix" evidence="6">
    <location>
        <begin position="349"/>
        <end position="363"/>
    </location>
</feature>
<feature type="strand" evidence="6">
    <location>
        <begin position="373"/>
        <end position="375"/>
    </location>
</feature>
<feature type="strand" evidence="6">
    <location>
        <begin position="385"/>
        <end position="387"/>
    </location>
</feature>
<feature type="strand" evidence="6">
    <location>
        <begin position="394"/>
        <end position="402"/>
    </location>
</feature>
<feature type="turn" evidence="6">
    <location>
        <begin position="403"/>
        <end position="405"/>
    </location>
</feature>
<feature type="strand" evidence="6">
    <location>
        <begin position="406"/>
        <end position="413"/>
    </location>
</feature>
<name>FABF_SYNY3</name>
<dbReference type="EC" id="2.3.1.179" evidence="1"/>
<dbReference type="EMBL" id="BA000022">
    <property type="protein sequence ID" value="BAA17311.1"/>
    <property type="molecule type" value="Genomic_DNA"/>
</dbReference>
<dbReference type="PIR" id="S77464">
    <property type="entry name" value="S77464"/>
</dbReference>
<dbReference type="PDB" id="1E5M">
    <property type="method" value="X-ray"/>
    <property type="resolution" value="1.54 A"/>
    <property type="chains" value="A=1-416"/>
</dbReference>
<dbReference type="PDBsum" id="1E5M"/>
<dbReference type="SMR" id="P73283"/>
<dbReference type="FunCoup" id="P73283">
    <property type="interactions" value="445"/>
</dbReference>
<dbReference type="STRING" id="1148.gene:10498174"/>
<dbReference type="PaxDb" id="1148-1652389"/>
<dbReference type="EnsemblBacteria" id="BAA17311">
    <property type="protein sequence ID" value="BAA17311"/>
    <property type="gene ID" value="BAA17311"/>
</dbReference>
<dbReference type="KEGG" id="syn:sll1069"/>
<dbReference type="eggNOG" id="COG0304">
    <property type="taxonomic scope" value="Bacteria"/>
</dbReference>
<dbReference type="InParanoid" id="P73283"/>
<dbReference type="PhylomeDB" id="P73283"/>
<dbReference type="BRENDA" id="2.3.1.179">
    <property type="organism ID" value="382"/>
</dbReference>
<dbReference type="UniPathway" id="UPA00094"/>
<dbReference type="EvolutionaryTrace" id="P73283"/>
<dbReference type="Proteomes" id="UP000001425">
    <property type="component" value="Chromosome"/>
</dbReference>
<dbReference type="GO" id="GO:0005829">
    <property type="term" value="C:cytosol"/>
    <property type="evidence" value="ECO:0000318"/>
    <property type="project" value="GO_Central"/>
</dbReference>
<dbReference type="GO" id="GO:0004315">
    <property type="term" value="F:3-oxoacyl-[acyl-carrier-protein] synthase activity"/>
    <property type="evidence" value="ECO:0000318"/>
    <property type="project" value="GO_Central"/>
</dbReference>
<dbReference type="GO" id="GO:0006633">
    <property type="term" value="P:fatty acid biosynthetic process"/>
    <property type="evidence" value="ECO:0000318"/>
    <property type="project" value="GO_Central"/>
</dbReference>
<dbReference type="CDD" id="cd00834">
    <property type="entry name" value="KAS_I_II"/>
    <property type="match status" value="1"/>
</dbReference>
<dbReference type="FunFam" id="3.40.47.10:FF:000009">
    <property type="entry name" value="3-oxoacyl-[acyl-carrier-protein] synthase 2"/>
    <property type="match status" value="1"/>
</dbReference>
<dbReference type="Gene3D" id="3.40.47.10">
    <property type="match status" value="2"/>
</dbReference>
<dbReference type="InterPro" id="IPR017568">
    <property type="entry name" value="3-oxoacyl-ACP_synth-2"/>
</dbReference>
<dbReference type="InterPro" id="IPR000794">
    <property type="entry name" value="Beta-ketoacyl_synthase"/>
</dbReference>
<dbReference type="InterPro" id="IPR018201">
    <property type="entry name" value="Ketoacyl_synth_AS"/>
</dbReference>
<dbReference type="InterPro" id="IPR014031">
    <property type="entry name" value="Ketoacyl_synth_C"/>
</dbReference>
<dbReference type="InterPro" id="IPR014030">
    <property type="entry name" value="Ketoacyl_synth_N"/>
</dbReference>
<dbReference type="InterPro" id="IPR020841">
    <property type="entry name" value="PKS_Beta-ketoAc_synthase_dom"/>
</dbReference>
<dbReference type="InterPro" id="IPR016039">
    <property type="entry name" value="Thiolase-like"/>
</dbReference>
<dbReference type="NCBIfam" id="TIGR03150">
    <property type="entry name" value="fabF"/>
    <property type="match status" value="1"/>
</dbReference>
<dbReference type="NCBIfam" id="NF004970">
    <property type="entry name" value="PRK06333.1"/>
    <property type="match status" value="1"/>
</dbReference>
<dbReference type="NCBIfam" id="NF005589">
    <property type="entry name" value="PRK07314.1"/>
    <property type="match status" value="1"/>
</dbReference>
<dbReference type="PANTHER" id="PTHR11712:SF336">
    <property type="entry name" value="3-OXOACYL-[ACYL-CARRIER-PROTEIN] SYNTHASE, MITOCHONDRIAL"/>
    <property type="match status" value="1"/>
</dbReference>
<dbReference type="PANTHER" id="PTHR11712">
    <property type="entry name" value="POLYKETIDE SYNTHASE-RELATED"/>
    <property type="match status" value="1"/>
</dbReference>
<dbReference type="Pfam" id="PF00109">
    <property type="entry name" value="ketoacyl-synt"/>
    <property type="match status" value="1"/>
</dbReference>
<dbReference type="Pfam" id="PF02801">
    <property type="entry name" value="Ketoacyl-synt_C"/>
    <property type="match status" value="1"/>
</dbReference>
<dbReference type="PIRSF" id="PIRSF000447">
    <property type="entry name" value="KAS_II"/>
    <property type="match status" value="1"/>
</dbReference>
<dbReference type="SMART" id="SM00825">
    <property type="entry name" value="PKS_KS"/>
    <property type="match status" value="1"/>
</dbReference>
<dbReference type="SUPFAM" id="SSF53901">
    <property type="entry name" value="Thiolase-like"/>
    <property type="match status" value="2"/>
</dbReference>
<dbReference type="PROSITE" id="PS00606">
    <property type="entry name" value="KS3_1"/>
    <property type="match status" value="1"/>
</dbReference>
<dbReference type="PROSITE" id="PS52004">
    <property type="entry name" value="KS3_2"/>
    <property type="match status" value="1"/>
</dbReference>
<accession>P73283</accession>
<keyword id="KW-0002">3D-structure</keyword>
<keyword id="KW-0012">Acyltransferase</keyword>
<keyword id="KW-0275">Fatty acid biosynthesis</keyword>
<keyword id="KW-0276">Fatty acid metabolism</keyword>
<keyword id="KW-0444">Lipid biosynthesis</keyword>
<keyword id="KW-0443">Lipid metabolism</keyword>
<keyword id="KW-1185">Reference proteome</keyword>
<keyword id="KW-0808">Transferase</keyword>
<protein>
    <recommendedName>
        <fullName>3-oxoacyl-[acyl-carrier-protein] synthase 2</fullName>
        <ecNumber evidence="1">2.3.1.179</ecNumber>
    </recommendedName>
    <alternativeName>
        <fullName>3-oxoacyl-[acyl-carrier-protein] synthase II</fullName>
    </alternativeName>
    <alternativeName>
        <fullName>Beta-ketoacyl-ACP synthase II</fullName>
        <shortName>KAS II</shortName>
    </alternativeName>
</protein>
<organism>
    <name type="scientific">Synechocystis sp. (strain ATCC 27184 / PCC 6803 / Kazusa)</name>
    <dbReference type="NCBI Taxonomy" id="1111708"/>
    <lineage>
        <taxon>Bacteria</taxon>
        <taxon>Bacillati</taxon>
        <taxon>Cyanobacteriota</taxon>
        <taxon>Cyanophyceae</taxon>
        <taxon>Synechococcales</taxon>
        <taxon>Merismopediaceae</taxon>
        <taxon>Synechocystis</taxon>
    </lineage>
</organism>
<comment type="function">
    <text evidence="1">Involved in the type II fatty acid elongation cycle. Catalyzes the elongation of a wide range of acyl-ACP by the addition of two carbons from malonyl-ACP to an acyl acceptor. Can efficiently catalyze the conversion of palmitoleoyl-ACP (cis-hexadec-9-enoyl-ACP) to cis-vaccenoyl-ACP (cis-octadec-11-enoyl-ACP), an essential step in the thermal regulation of fatty acid composition.</text>
</comment>
<comment type="catalytic activity">
    <reaction evidence="1">
        <text>a fatty acyl-[ACP] + malonyl-[ACP] + H(+) = a 3-oxoacyl-[ACP] + holo-[ACP] + CO2</text>
        <dbReference type="Rhea" id="RHEA:22836"/>
        <dbReference type="Rhea" id="RHEA-COMP:9623"/>
        <dbReference type="Rhea" id="RHEA-COMP:9685"/>
        <dbReference type="Rhea" id="RHEA-COMP:9916"/>
        <dbReference type="Rhea" id="RHEA-COMP:14125"/>
        <dbReference type="ChEBI" id="CHEBI:15378"/>
        <dbReference type="ChEBI" id="CHEBI:16526"/>
        <dbReference type="ChEBI" id="CHEBI:64479"/>
        <dbReference type="ChEBI" id="CHEBI:78449"/>
        <dbReference type="ChEBI" id="CHEBI:78776"/>
        <dbReference type="ChEBI" id="CHEBI:138651"/>
    </reaction>
</comment>
<comment type="catalytic activity">
    <reaction evidence="1">
        <text>(9Z)-hexadecenoyl-[ACP] + malonyl-[ACP] + H(+) = 3-oxo-(11Z)-octadecenoyl-[ACP] + holo-[ACP] + CO2</text>
        <dbReference type="Rhea" id="RHEA:55040"/>
        <dbReference type="Rhea" id="RHEA-COMP:9623"/>
        <dbReference type="Rhea" id="RHEA-COMP:9685"/>
        <dbReference type="Rhea" id="RHEA-COMP:10800"/>
        <dbReference type="Rhea" id="RHEA-COMP:14074"/>
        <dbReference type="ChEBI" id="CHEBI:15378"/>
        <dbReference type="ChEBI" id="CHEBI:16526"/>
        <dbReference type="ChEBI" id="CHEBI:64479"/>
        <dbReference type="ChEBI" id="CHEBI:78449"/>
        <dbReference type="ChEBI" id="CHEBI:83989"/>
        <dbReference type="ChEBI" id="CHEBI:138538"/>
        <dbReference type="EC" id="2.3.1.179"/>
    </reaction>
</comment>
<comment type="pathway">
    <text evidence="1">Lipid metabolism; fatty acid biosynthesis.</text>
</comment>
<comment type="subunit">
    <text evidence="3">Homodimer.</text>
</comment>
<comment type="similarity">
    <text evidence="4">Belongs to the thiolase-like superfamily. Beta-ketoacyl-ACP synthases family.</text>
</comment>
<proteinExistence type="evidence at protein level"/>
<sequence>MANLEKKRVVVTGLGAITPIGNTLQDYWQGLMEGRNGIGPITRFDASDQACRFGGEVKDFDATQFLDRKEAKRMDRFCHFAVCASQQAINDAKLVINELNADEIGVLIGTGIGGLKVLEDQQTILLDKGPSRCSPFMIPMMIANMASGLTAINLGAKGPNNCTVTACAAGSNAIGDAFRLVQNGYAKAMICGGTEAAITPLSYAGFASARALSFRNDDPLHASRPFDKDRDGFVMGEGSGILILEELESALARGAKIYGEMVGYAMTCDAYHITAPVPDGRGATRAIAWALKDSGLKPEMVSYINAHGTSTPANDVTETRAIKQALGNHAYNIAVSSTKSMTGHLLGGSGGIEAVATVMAIAEDKVPPTINLENPDPECDLDYVPGQSRALIVDVALSNSFGFGGHNVTLAFKKYQ</sequence>